<sequence>MAVRLPRGFRAGATRAGIKPSGRPDLALLVSGLPAAWAYAATQNRAAAPSIHRGRALYASGKPLRAVVVNAGNANCATGERGYEDDRRMAELAALRLGLSPEEVLTASTGVIGVPLPVEKIAKGLPEIGLTPFAEAFAEAILTTDTRPKVAEAEVAGARIVGLAKGSGMIHPNMATMLAFLVTDALVPQEALRAGWRRVVERTFNQVTVDGDTSTNDLALLMANGAYGEVPLKAFFEGVEAVAQELARMIARDGEGATKLMVVRVVGAATEEEARRAARAIAGSALWKSALYGNDPNWGRILAALGNSGARFDPLRVRIVLQGIPLYEGAVLPFDREEAGQAMRAEEVEVLVDLREGQGAGEAYGCDLTEDYVRINALYTT</sequence>
<feature type="chain" id="PRO_0000002261" description="Arginine biosynthesis bifunctional protein ArgJ alpha chain" evidence="1">
    <location>
        <begin position="1"/>
        <end position="175"/>
    </location>
</feature>
<feature type="chain" id="PRO_0000002262" description="Arginine biosynthesis bifunctional protein ArgJ beta chain" evidence="1">
    <location>
        <begin position="176"/>
        <end position="381"/>
    </location>
</feature>
<feature type="active site" description="Nucleophile" evidence="1">
    <location>
        <position position="176"/>
    </location>
</feature>
<feature type="binding site" evidence="1">
    <location>
        <position position="143"/>
    </location>
    <ligand>
        <name>substrate</name>
    </ligand>
</feature>
<feature type="binding site" evidence="1">
    <location>
        <position position="165"/>
    </location>
    <ligand>
        <name>substrate</name>
    </ligand>
</feature>
<feature type="binding site" evidence="1">
    <location>
        <position position="176"/>
    </location>
    <ligand>
        <name>substrate</name>
    </ligand>
</feature>
<feature type="binding site" evidence="1">
    <location>
        <position position="255"/>
    </location>
    <ligand>
        <name>substrate</name>
    </ligand>
</feature>
<feature type="binding site" evidence="1">
    <location>
        <position position="376"/>
    </location>
    <ligand>
        <name>substrate</name>
    </ligand>
</feature>
<feature type="binding site" evidence="1">
    <location>
        <position position="381"/>
    </location>
    <ligand>
        <name>substrate</name>
    </ligand>
</feature>
<feature type="site" description="Involved in the stabilization of negative charge on the oxyanion by the formation of the oxyanion hole" evidence="1">
    <location>
        <position position="109"/>
    </location>
</feature>
<feature type="site" description="Involved in the stabilization of negative charge on the oxyanion by the formation of the oxyanion hole" evidence="1">
    <location>
        <position position="110"/>
    </location>
</feature>
<feature type="site" description="Cleavage; by autolysis" evidence="1">
    <location>
        <begin position="175"/>
        <end position="176"/>
    </location>
</feature>
<feature type="sequence conflict" description="In Ref. 1; CAA71551 and 2; CAA77143." evidence="2" ref="1 2">
    <original>V</original>
    <variation>E</variation>
    <location>
        <position position="242"/>
    </location>
</feature>
<feature type="sequence conflict" description="In Ref. 1; CAA71551 and 2; CAA77143." evidence="2" ref="1 2">
    <original>A</original>
    <variation>E</variation>
    <location>
        <position position="268"/>
    </location>
</feature>
<feature type="sequence conflict" description="In Ref. 1; CAA71551 and 2; CAA77143." evidence="2" ref="1 2">
    <original>E</original>
    <variation>G</variation>
    <location>
        <position position="273"/>
    </location>
</feature>
<feature type="sequence conflict" description="In Ref. 1; CAA71551 and 2; CAA77143." evidence="2" ref="1 2">
    <original>I</original>
    <variation>L</variation>
    <location>
        <position position="281"/>
    </location>
</feature>
<proteinExistence type="inferred from homology"/>
<keyword id="KW-0012">Acyltransferase</keyword>
<keyword id="KW-0028">Amino-acid biosynthesis</keyword>
<keyword id="KW-0055">Arginine biosynthesis</keyword>
<keyword id="KW-0068">Autocatalytic cleavage</keyword>
<keyword id="KW-0963">Cytoplasm</keyword>
<keyword id="KW-0511">Multifunctional enzyme</keyword>
<keyword id="KW-0808">Transferase</keyword>
<organism>
    <name type="scientific">Thermus thermophilus (strain ATCC BAA-163 / DSM 7039 / HB27)</name>
    <dbReference type="NCBI Taxonomy" id="262724"/>
    <lineage>
        <taxon>Bacteria</taxon>
        <taxon>Thermotogati</taxon>
        <taxon>Deinococcota</taxon>
        <taxon>Deinococci</taxon>
        <taxon>Thermales</taxon>
        <taxon>Thermaceae</taxon>
        <taxon>Thermus</taxon>
    </lineage>
</organism>
<name>ARGJ_THET2</name>
<reference key="1">
    <citation type="journal article" date="1998" name="Microbiology">
        <title>Genes and enzymes of the acetyl cycle of arginine biosynthesis in the extreme thermophilic bacterium Thermus thermophilus HB27.</title>
        <authorList>
            <person name="Baetens M.C.Y."/>
            <person name="Legrain C."/>
            <person name="Boyen A."/>
            <person name="Glansdorff N."/>
        </authorList>
    </citation>
    <scope>NUCLEOTIDE SEQUENCE [GENOMIC DNA]</scope>
</reference>
<reference key="2">
    <citation type="journal article" date="2000" name="J. Bacteriol.">
        <title>Organization and expression of a Thermus thermophilus arginine cluster: presence of unidentified open reading frames and absence of a Shine-Dalgarno sequence.</title>
        <authorList>
            <person name="Sanchez R."/>
            <person name="Roovers M."/>
            <person name="Glansdorff N."/>
        </authorList>
    </citation>
    <scope>NUCLEOTIDE SEQUENCE [GENOMIC DNA]</scope>
</reference>
<reference key="3">
    <citation type="journal article" date="2004" name="Nat. Biotechnol.">
        <title>The genome sequence of the extreme thermophile Thermus thermophilus.</title>
        <authorList>
            <person name="Henne A."/>
            <person name="Brueggemann H."/>
            <person name="Raasch C."/>
            <person name="Wiezer A."/>
            <person name="Hartsch T."/>
            <person name="Liesegang H."/>
            <person name="Johann A."/>
            <person name="Lienard T."/>
            <person name="Gohl O."/>
            <person name="Martinez-Arias R."/>
            <person name="Jacobi C."/>
            <person name="Starkuviene V."/>
            <person name="Schlenczeck S."/>
            <person name="Dencker S."/>
            <person name="Huber R."/>
            <person name="Klenk H.-P."/>
            <person name="Kramer W."/>
            <person name="Merkl R."/>
            <person name="Gottschalk G."/>
            <person name="Fritz H.-J."/>
        </authorList>
    </citation>
    <scope>NUCLEOTIDE SEQUENCE [LARGE SCALE GENOMIC DNA]</scope>
    <source>
        <strain>ATCC BAA-163 / DSM 7039 / HB27</strain>
    </source>
</reference>
<evidence type="ECO:0000255" key="1">
    <source>
        <dbReference type="HAMAP-Rule" id="MF_01106"/>
    </source>
</evidence>
<evidence type="ECO:0000305" key="2"/>
<comment type="function">
    <text evidence="1">Catalyzes two activities which are involved in the cyclic version of arginine biosynthesis: the synthesis of N-acetylglutamate from glutamate and acetyl-CoA as the acetyl donor, and of ornithine by transacetylation between N(2)-acetylornithine and glutamate.</text>
</comment>
<comment type="catalytic activity">
    <reaction evidence="1">
        <text>N(2)-acetyl-L-ornithine + L-glutamate = N-acetyl-L-glutamate + L-ornithine</text>
        <dbReference type="Rhea" id="RHEA:15349"/>
        <dbReference type="ChEBI" id="CHEBI:29985"/>
        <dbReference type="ChEBI" id="CHEBI:44337"/>
        <dbReference type="ChEBI" id="CHEBI:46911"/>
        <dbReference type="ChEBI" id="CHEBI:57805"/>
        <dbReference type="EC" id="2.3.1.35"/>
    </reaction>
</comment>
<comment type="catalytic activity">
    <reaction evidence="1">
        <text>L-glutamate + acetyl-CoA = N-acetyl-L-glutamate + CoA + H(+)</text>
        <dbReference type="Rhea" id="RHEA:24292"/>
        <dbReference type="ChEBI" id="CHEBI:15378"/>
        <dbReference type="ChEBI" id="CHEBI:29985"/>
        <dbReference type="ChEBI" id="CHEBI:44337"/>
        <dbReference type="ChEBI" id="CHEBI:57287"/>
        <dbReference type="ChEBI" id="CHEBI:57288"/>
        <dbReference type="EC" id="2.3.1.1"/>
    </reaction>
</comment>
<comment type="pathway">
    <text evidence="1">Amino-acid biosynthesis; L-arginine biosynthesis; L-ornithine and N-acetyl-L-glutamate from L-glutamate and N(2)-acetyl-L-ornithine (cyclic): step 1/1.</text>
</comment>
<comment type="pathway">
    <text evidence="1">Amino-acid biosynthesis; L-arginine biosynthesis; N(2)-acetyl-L-ornithine from L-glutamate: step 1/4.</text>
</comment>
<comment type="subunit">
    <text evidence="1">Heterotetramer of two alpha and two beta chains.</text>
</comment>
<comment type="subcellular location">
    <subcellularLocation>
        <location evidence="1">Cytoplasm</location>
    </subcellularLocation>
</comment>
<comment type="similarity">
    <text evidence="1">Belongs to the ArgJ family.</text>
</comment>
<dbReference type="EC" id="2.3.1.35" evidence="1"/>
<dbReference type="EC" id="2.3.1.1" evidence="1"/>
<dbReference type="EMBL" id="Y10525">
    <property type="protein sequence ID" value="CAA71551.1"/>
    <property type="molecule type" value="Genomic_DNA"/>
</dbReference>
<dbReference type="EMBL" id="Y18353">
    <property type="protein sequence ID" value="CAA77143.1"/>
    <property type="molecule type" value="Genomic_DNA"/>
</dbReference>
<dbReference type="EMBL" id="AE017221">
    <property type="protein sequence ID" value="AAS81181.1"/>
    <property type="molecule type" value="Genomic_DNA"/>
</dbReference>
<dbReference type="RefSeq" id="WP_011173266.1">
    <property type="nucleotide sequence ID" value="NC_005835.1"/>
</dbReference>
<dbReference type="SMR" id="P96137"/>
<dbReference type="MEROPS" id="T05.002"/>
<dbReference type="KEGG" id="tth:TT_C0835"/>
<dbReference type="eggNOG" id="COG1364">
    <property type="taxonomic scope" value="Bacteria"/>
</dbReference>
<dbReference type="HOGENOM" id="CLU_027172_1_0_0"/>
<dbReference type="OrthoDB" id="9804242at2"/>
<dbReference type="UniPathway" id="UPA00068">
    <property type="reaction ID" value="UER00106"/>
</dbReference>
<dbReference type="UniPathway" id="UPA00068">
    <property type="reaction ID" value="UER00111"/>
</dbReference>
<dbReference type="Proteomes" id="UP000000592">
    <property type="component" value="Chromosome"/>
</dbReference>
<dbReference type="GO" id="GO:0005737">
    <property type="term" value="C:cytoplasm"/>
    <property type="evidence" value="ECO:0007669"/>
    <property type="project" value="UniProtKB-SubCell"/>
</dbReference>
<dbReference type="GO" id="GO:0004358">
    <property type="term" value="F:glutamate N-acetyltransferase activity"/>
    <property type="evidence" value="ECO:0007669"/>
    <property type="project" value="UniProtKB-UniRule"/>
</dbReference>
<dbReference type="GO" id="GO:0004042">
    <property type="term" value="F:L-glutamate N-acetyltransferase activity"/>
    <property type="evidence" value="ECO:0007669"/>
    <property type="project" value="UniProtKB-UniRule"/>
</dbReference>
<dbReference type="GO" id="GO:0006526">
    <property type="term" value="P:L-arginine biosynthetic process"/>
    <property type="evidence" value="ECO:0007669"/>
    <property type="project" value="UniProtKB-UniRule"/>
</dbReference>
<dbReference type="GO" id="GO:0006592">
    <property type="term" value="P:ornithine biosynthetic process"/>
    <property type="evidence" value="ECO:0007669"/>
    <property type="project" value="TreeGrafter"/>
</dbReference>
<dbReference type="CDD" id="cd02152">
    <property type="entry name" value="OAT"/>
    <property type="match status" value="1"/>
</dbReference>
<dbReference type="FunFam" id="3.10.20.340:FF:000003">
    <property type="entry name" value="Arginine biosynthesis bifunctional protein ArgJ"/>
    <property type="match status" value="1"/>
</dbReference>
<dbReference type="Gene3D" id="3.10.20.340">
    <property type="entry name" value="ArgJ beta chain, C-terminal domain"/>
    <property type="match status" value="1"/>
</dbReference>
<dbReference type="Gene3D" id="3.60.70.12">
    <property type="entry name" value="L-amino peptidase D-ALA esterase/amidase"/>
    <property type="match status" value="1"/>
</dbReference>
<dbReference type="HAMAP" id="MF_01106">
    <property type="entry name" value="ArgJ"/>
    <property type="match status" value="1"/>
</dbReference>
<dbReference type="InterPro" id="IPR002813">
    <property type="entry name" value="Arg_biosynth_ArgJ"/>
</dbReference>
<dbReference type="InterPro" id="IPR016117">
    <property type="entry name" value="ArgJ-like_dom_sf"/>
</dbReference>
<dbReference type="InterPro" id="IPR042195">
    <property type="entry name" value="ArgJ_beta_C"/>
</dbReference>
<dbReference type="NCBIfam" id="TIGR00120">
    <property type="entry name" value="ArgJ"/>
    <property type="match status" value="1"/>
</dbReference>
<dbReference type="NCBIfam" id="NF003802">
    <property type="entry name" value="PRK05388.1"/>
    <property type="match status" value="1"/>
</dbReference>
<dbReference type="PANTHER" id="PTHR23100">
    <property type="entry name" value="ARGININE BIOSYNTHESIS BIFUNCTIONAL PROTEIN ARGJ"/>
    <property type="match status" value="1"/>
</dbReference>
<dbReference type="PANTHER" id="PTHR23100:SF0">
    <property type="entry name" value="ARGININE BIOSYNTHESIS BIFUNCTIONAL PROTEIN ARGJ, MITOCHONDRIAL"/>
    <property type="match status" value="1"/>
</dbReference>
<dbReference type="Pfam" id="PF01960">
    <property type="entry name" value="ArgJ"/>
    <property type="match status" value="1"/>
</dbReference>
<dbReference type="SUPFAM" id="SSF56266">
    <property type="entry name" value="DmpA/ArgJ-like"/>
    <property type="match status" value="1"/>
</dbReference>
<protein>
    <recommendedName>
        <fullName evidence="1">Arginine biosynthesis bifunctional protein ArgJ</fullName>
    </recommendedName>
    <domain>
        <recommendedName>
            <fullName evidence="1">Glutamate N-acetyltransferase</fullName>
            <ecNumber evidence="1">2.3.1.35</ecNumber>
        </recommendedName>
        <alternativeName>
            <fullName evidence="1">Ornithine acetyltransferase</fullName>
            <shortName evidence="1">OATase</shortName>
        </alternativeName>
        <alternativeName>
            <fullName evidence="1">Ornithine transacetylase</fullName>
        </alternativeName>
    </domain>
    <domain>
        <recommendedName>
            <fullName evidence="1">Amino-acid acetyltransferase</fullName>
            <ecNumber evidence="1">2.3.1.1</ecNumber>
        </recommendedName>
        <alternativeName>
            <fullName evidence="1">N-acetylglutamate synthase</fullName>
            <shortName evidence="1">AGSase</shortName>
        </alternativeName>
    </domain>
    <component>
        <recommendedName>
            <fullName evidence="1">Arginine biosynthesis bifunctional protein ArgJ alpha chain</fullName>
        </recommendedName>
    </component>
    <component>
        <recommendedName>
            <fullName evidence="1">Arginine biosynthesis bifunctional protein ArgJ beta chain</fullName>
        </recommendedName>
    </component>
</protein>
<accession>P96137</accession>
<gene>
    <name evidence="1" type="primary">argJ</name>
    <name type="ordered locus">TT_C0835</name>
</gene>